<organism>
    <name type="scientific">Pseudomonas aeruginosa (strain ATCC 15692 / DSM 22644 / CIP 104116 / JCM 14847 / LMG 12228 / 1C / PRS 101 / PAO1)</name>
    <dbReference type="NCBI Taxonomy" id="208964"/>
    <lineage>
        <taxon>Bacteria</taxon>
        <taxon>Pseudomonadati</taxon>
        <taxon>Pseudomonadota</taxon>
        <taxon>Gammaproteobacteria</taxon>
        <taxon>Pseudomonadales</taxon>
        <taxon>Pseudomonadaceae</taxon>
        <taxon>Pseudomonas</taxon>
    </lineage>
</organism>
<gene>
    <name type="primary">pfeS</name>
    <name type="ordered locus">PA2687</name>
</gene>
<dbReference type="EC" id="2.7.13.3"/>
<dbReference type="EMBL" id="L07739">
    <property type="protein sequence ID" value="AAA25930.1"/>
    <property type="molecule type" value="Genomic_DNA"/>
</dbReference>
<dbReference type="EMBL" id="AE004091">
    <property type="protein sequence ID" value="AAG06075.1"/>
    <property type="molecule type" value="Genomic_DNA"/>
</dbReference>
<dbReference type="PIR" id="A83311">
    <property type="entry name" value="A83311"/>
</dbReference>
<dbReference type="PIR" id="S34997">
    <property type="entry name" value="S34997"/>
</dbReference>
<dbReference type="RefSeq" id="NP_251377.1">
    <property type="nucleotide sequence ID" value="NC_002516.2"/>
</dbReference>
<dbReference type="RefSeq" id="WP_003113403.1">
    <property type="nucleotide sequence ID" value="NZ_QZGE01000008.1"/>
</dbReference>
<dbReference type="PDB" id="3KYZ">
    <property type="method" value="X-ray"/>
    <property type="resolution" value="1.50 A"/>
    <property type="chains" value="A=28-149"/>
</dbReference>
<dbReference type="PDBsum" id="3KYZ"/>
<dbReference type="SMR" id="Q04804"/>
<dbReference type="STRING" id="208964.PA2687"/>
<dbReference type="PaxDb" id="208964-PA2687"/>
<dbReference type="DNASU" id="882765"/>
<dbReference type="GeneID" id="882765"/>
<dbReference type="KEGG" id="pae:PA2687"/>
<dbReference type="PATRIC" id="fig|208964.12.peg.2812"/>
<dbReference type="PseudoCAP" id="PA2687"/>
<dbReference type="HOGENOM" id="CLU_000445_89_27_6"/>
<dbReference type="InParanoid" id="Q04804"/>
<dbReference type="OrthoDB" id="9804645at2"/>
<dbReference type="PhylomeDB" id="Q04804"/>
<dbReference type="BioCyc" id="PAER208964:G1FZ6-2727-MONOMER"/>
<dbReference type="BRENDA" id="2.7.13.3">
    <property type="organism ID" value="5087"/>
</dbReference>
<dbReference type="EvolutionaryTrace" id="Q04804"/>
<dbReference type="Proteomes" id="UP000002438">
    <property type="component" value="Chromosome"/>
</dbReference>
<dbReference type="GO" id="GO:0005886">
    <property type="term" value="C:plasma membrane"/>
    <property type="evidence" value="ECO:0007669"/>
    <property type="project" value="UniProtKB-SubCell"/>
</dbReference>
<dbReference type="GO" id="GO:0005524">
    <property type="term" value="F:ATP binding"/>
    <property type="evidence" value="ECO:0007669"/>
    <property type="project" value="UniProtKB-KW"/>
</dbReference>
<dbReference type="GO" id="GO:0000155">
    <property type="term" value="F:phosphorelay sensor kinase activity"/>
    <property type="evidence" value="ECO:0007669"/>
    <property type="project" value="InterPro"/>
</dbReference>
<dbReference type="GO" id="GO:0000160">
    <property type="term" value="P:phosphorelay signal transduction system"/>
    <property type="evidence" value="ECO:0000314"/>
    <property type="project" value="PseudoCAP"/>
</dbReference>
<dbReference type="CDD" id="cd06225">
    <property type="entry name" value="HAMP"/>
    <property type="match status" value="1"/>
</dbReference>
<dbReference type="CDD" id="cd00082">
    <property type="entry name" value="HisKA"/>
    <property type="match status" value="1"/>
</dbReference>
<dbReference type="Gene3D" id="1.10.287.130">
    <property type="match status" value="1"/>
</dbReference>
<dbReference type="Gene3D" id="1.10.8.500">
    <property type="entry name" value="HAMP domain in histidine kinase"/>
    <property type="match status" value="1"/>
</dbReference>
<dbReference type="Gene3D" id="3.30.565.10">
    <property type="entry name" value="Histidine kinase-like ATPase, C-terminal domain"/>
    <property type="match status" value="1"/>
</dbReference>
<dbReference type="Gene3D" id="3.30.450.170">
    <property type="entry name" value="Two-component histidine kinase, sensor domain"/>
    <property type="match status" value="1"/>
</dbReference>
<dbReference type="InterPro" id="IPR003660">
    <property type="entry name" value="HAMP_dom"/>
</dbReference>
<dbReference type="InterPro" id="IPR036890">
    <property type="entry name" value="HATPase_C_sf"/>
</dbReference>
<dbReference type="InterPro" id="IPR005467">
    <property type="entry name" value="His_kinase_dom"/>
</dbReference>
<dbReference type="InterPro" id="IPR003661">
    <property type="entry name" value="HisK_dim/P_dom"/>
</dbReference>
<dbReference type="InterPro" id="IPR036097">
    <property type="entry name" value="HisK_dim/P_sf"/>
</dbReference>
<dbReference type="InterPro" id="IPR031930">
    <property type="entry name" value="HK_sensor"/>
</dbReference>
<dbReference type="InterPro" id="IPR038428">
    <property type="entry name" value="HK_sensor_dom_sf"/>
</dbReference>
<dbReference type="InterPro" id="IPR004358">
    <property type="entry name" value="Sig_transdc_His_kin-like_C"/>
</dbReference>
<dbReference type="InterPro" id="IPR050428">
    <property type="entry name" value="TCS_sensor_his_kinase"/>
</dbReference>
<dbReference type="PANTHER" id="PTHR45436:SF15">
    <property type="entry name" value="SENSOR HISTIDINE KINASE CUSS"/>
    <property type="match status" value="1"/>
</dbReference>
<dbReference type="PANTHER" id="PTHR45436">
    <property type="entry name" value="SENSOR HISTIDINE KINASE YKOH"/>
    <property type="match status" value="1"/>
</dbReference>
<dbReference type="Pfam" id="PF00672">
    <property type="entry name" value="HAMP"/>
    <property type="match status" value="1"/>
</dbReference>
<dbReference type="Pfam" id="PF02518">
    <property type="entry name" value="HATPase_c"/>
    <property type="match status" value="1"/>
</dbReference>
<dbReference type="Pfam" id="PF00512">
    <property type="entry name" value="HisKA"/>
    <property type="match status" value="1"/>
</dbReference>
<dbReference type="Pfam" id="PF16750">
    <property type="entry name" value="HK_sensor"/>
    <property type="match status" value="1"/>
</dbReference>
<dbReference type="PRINTS" id="PR00344">
    <property type="entry name" value="BCTRLSENSOR"/>
</dbReference>
<dbReference type="SMART" id="SM00304">
    <property type="entry name" value="HAMP"/>
    <property type="match status" value="1"/>
</dbReference>
<dbReference type="SMART" id="SM00387">
    <property type="entry name" value="HATPase_c"/>
    <property type="match status" value="1"/>
</dbReference>
<dbReference type="SMART" id="SM00388">
    <property type="entry name" value="HisKA"/>
    <property type="match status" value="1"/>
</dbReference>
<dbReference type="SUPFAM" id="SSF55874">
    <property type="entry name" value="ATPase domain of HSP90 chaperone/DNA topoisomerase II/histidine kinase"/>
    <property type="match status" value="1"/>
</dbReference>
<dbReference type="SUPFAM" id="SSF158472">
    <property type="entry name" value="HAMP domain-like"/>
    <property type="match status" value="1"/>
</dbReference>
<dbReference type="SUPFAM" id="SSF47384">
    <property type="entry name" value="Homodimeric domain of signal transducing histidine kinase"/>
    <property type="match status" value="1"/>
</dbReference>
<dbReference type="PROSITE" id="PS50885">
    <property type="entry name" value="HAMP"/>
    <property type="match status" value="1"/>
</dbReference>
<dbReference type="PROSITE" id="PS50109">
    <property type="entry name" value="HIS_KIN"/>
    <property type="match status" value="1"/>
</dbReference>
<sequence length="446" mass="50540">MRRHPLLWKLALLQVGFCLLLTWLIYTWGLSVERSTYFLAPADRHYLADYARQAEDAWRREGAAGAERFRKELSAKEDTWVALVGPHLESLGSTPLSAEESSHLTFMRKLDWPMSRRLQDELPYVSIEFPGHPEQGRLVIQLPERLLPGGLTPWTHLVTHGIVPTLLAALLGLLLYRHLVVPLNRLRDRADALRADELESTPLAAPLAARRDELGELAQALEHMAERLRLSLAQQRLLLRTLSHELRTPLARLRIAHDSELPPEQLRQRLDREIGDMQRLLEDTLDLAWMDTERPQLPTEPVLALSVWEALRDDACFESGWDPARLPCRLGVDCRVEVHLDSLAQAMENLLRNAIRHSPEDGTVSLDGEREGDFWHLRLQDQGPGVAEDQLERIFLPYQRLDDSAGEGFGLGLAIARRAIELQGGRLWASNGKPGLCLHLWLPAAA</sequence>
<proteinExistence type="evidence at protein level"/>
<comment type="function">
    <text>Member of the two-component regulatory system PfeR/PfeS. May activate PfeR by phosphorylation.</text>
</comment>
<comment type="catalytic activity">
    <reaction>
        <text>ATP + protein L-histidine = ADP + protein N-phospho-L-histidine.</text>
        <dbReference type="EC" id="2.7.13.3"/>
    </reaction>
</comment>
<comment type="subcellular location">
    <subcellularLocation>
        <location evidence="4">Cell inner membrane</location>
        <topology evidence="4">Multi-pass membrane protein</topology>
    </subcellularLocation>
</comment>
<reference key="1">
    <citation type="journal article" date="1993" name="Mol. Microbiol.">
        <title>Expression of the ferric enterobactin receptor (PfeA) of Pseudomonas aeruginosa: involvement of a two-component regulatory system.</title>
        <authorList>
            <person name="Dean C.R."/>
            <person name="Poole K."/>
        </authorList>
    </citation>
    <scope>NUCLEOTIDE SEQUENCE [GENOMIC DNA]</scope>
    <source>
        <strain>PAO</strain>
    </source>
</reference>
<reference key="2">
    <citation type="journal article" date="2000" name="Nature">
        <title>Complete genome sequence of Pseudomonas aeruginosa PAO1, an opportunistic pathogen.</title>
        <authorList>
            <person name="Stover C.K."/>
            <person name="Pham X.-Q.T."/>
            <person name="Erwin A.L."/>
            <person name="Mizoguchi S.D."/>
            <person name="Warrener P."/>
            <person name="Hickey M.J."/>
            <person name="Brinkman F.S.L."/>
            <person name="Hufnagle W.O."/>
            <person name="Kowalik D.J."/>
            <person name="Lagrou M."/>
            <person name="Garber R.L."/>
            <person name="Goltry L."/>
            <person name="Tolentino E."/>
            <person name="Westbrock-Wadman S."/>
            <person name="Yuan Y."/>
            <person name="Brody L.L."/>
            <person name="Coulter S.N."/>
            <person name="Folger K.R."/>
            <person name="Kas A."/>
            <person name="Larbig K."/>
            <person name="Lim R.M."/>
            <person name="Smith K.A."/>
            <person name="Spencer D.H."/>
            <person name="Wong G.K.-S."/>
            <person name="Wu Z."/>
            <person name="Paulsen I.T."/>
            <person name="Reizer J."/>
            <person name="Saier M.H. Jr."/>
            <person name="Hancock R.E.W."/>
            <person name="Lory S."/>
            <person name="Olson M.V."/>
        </authorList>
    </citation>
    <scope>NUCLEOTIDE SEQUENCE [LARGE SCALE GENOMIC DNA]</scope>
    <source>
        <strain>ATCC 15692 / DSM 22644 / CIP 104116 / JCM 14847 / LMG 12228 / 1C / PRS 101 / PAO1</strain>
    </source>
</reference>
<feature type="chain" id="PRO_0000074835" description="Sensor protein PfeS">
    <location>
        <begin position="1"/>
        <end position="446"/>
    </location>
</feature>
<feature type="topological domain" description="Cytoplasmic" evidence="1">
    <location>
        <begin position="1"/>
        <end position="9"/>
    </location>
</feature>
<feature type="transmembrane region" description="Helical" evidence="1">
    <location>
        <begin position="10"/>
        <end position="30"/>
    </location>
</feature>
<feature type="topological domain" description="Periplasmic" evidence="1">
    <location>
        <begin position="31"/>
        <end position="155"/>
    </location>
</feature>
<feature type="transmembrane region" description="Helical" evidence="1">
    <location>
        <begin position="156"/>
        <end position="176"/>
    </location>
</feature>
<feature type="topological domain" description="Cytoplasmic" evidence="1">
    <location>
        <begin position="177"/>
        <end position="446"/>
    </location>
</feature>
<feature type="domain" description="HAMP" evidence="2">
    <location>
        <begin position="177"/>
        <end position="233"/>
    </location>
</feature>
<feature type="domain" description="Histidine kinase" evidence="3">
    <location>
        <begin position="241"/>
        <end position="446"/>
    </location>
</feature>
<feature type="modified residue" description="Phosphohistidine; by autocatalysis" evidence="3">
    <location>
        <position position="244"/>
    </location>
</feature>
<feature type="sequence conflict" description="In Ref. 1; AAA25930." evidence="4" ref="1">
    <original>A</original>
    <variation>E</variation>
    <location>
        <position position="304"/>
    </location>
</feature>
<feature type="helix" evidence="5">
    <location>
        <begin position="41"/>
        <end position="77"/>
    </location>
</feature>
<feature type="strand" evidence="5">
    <location>
        <begin position="81"/>
        <end position="84"/>
    </location>
</feature>
<feature type="strand" evidence="5">
    <location>
        <begin position="90"/>
        <end position="94"/>
    </location>
</feature>
<feature type="helix" evidence="5">
    <location>
        <begin position="98"/>
        <end position="101"/>
    </location>
</feature>
<feature type="helix" evidence="5">
    <location>
        <begin position="102"/>
        <end position="104"/>
    </location>
</feature>
<feature type="turn" evidence="5">
    <location>
        <begin position="117"/>
        <end position="120"/>
    </location>
</feature>
<feature type="strand" evidence="5">
    <location>
        <begin position="124"/>
        <end position="128"/>
    </location>
</feature>
<feature type="helix" evidence="5">
    <location>
        <begin position="133"/>
        <end position="135"/>
    </location>
</feature>
<feature type="strand" evidence="5">
    <location>
        <begin position="137"/>
        <end position="141"/>
    </location>
</feature>
<feature type="helix" evidence="5">
    <location>
        <begin position="144"/>
        <end position="146"/>
    </location>
</feature>
<accession>Q04804</accession>
<keyword id="KW-0002">3D-structure</keyword>
<keyword id="KW-0067">ATP-binding</keyword>
<keyword id="KW-0997">Cell inner membrane</keyword>
<keyword id="KW-1003">Cell membrane</keyword>
<keyword id="KW-0418">Kinase</keyword>
<keyword id="KW-0472">Membrane</keyword>
<keyword id="KW-0547">Nucleotide-binding</keyword>
<keyword id="KW-0597">Phosphoprotein</keyword>
<keyword id="KW-1185">Reference proteome</keyword>
<keyword id="KW-0808">Transferase</keyword>
<keyword id="KW-0812">Transmembrane</keyword>
<keyword id="KW-1133">Transmembrane helix</keyword>
<keyword id="KW-0902">Two-component regulatory system</keyword>
<name>PFES_PSEAE</name>
<protein>
    <recommendedName>
        <fullName>Sensor protein PfeS</fullName>
        <ecNumber>2.7.13.3</ecNumber>
    </recommendedName>
</protein>
<evidence type="ECO:0000255" key="1"/>
<evidence type="ECO:0000255" key="2">
    <source>
        <dbReference type="PROSITE-ProRule" id="PRU00102"/>
    </source>
</evidence>
<evidence type="ECO:0000255" key="3">
    <source>
        <dbReference type="PROSITE-ProRule" id="PRU00107"/>
    </source>
</evidence>
<evidence type="ECO:0000305" key="4"/>
<evidence type="ECO:0007829" key="5">
    <source>
        <dbReference type="PDB" id="3KYZ"/>
    </source>
</evidence>